<reference key="1">
    <citation type="journal article" date="2010" name="PLoS ONE">
        <title>The complete genome sequence of Cupriavidus metallidurans strain CH34, a master survivalist in harsh and anthropogenic environments.</title>
        <authorList>
            <person name="Janssen P.J."/>
            <person name="Van Houdt R."/>
            <person name="Moors H."/>
            <person name="Monsieurs P."/>
            <person name="Morin N."/>
            <person name="Michaux A."/>
            <person name="Benotmane M.A."/>
            <person name="Leys N."/>
            <person name="Vallaeys T."/>
            <person name="Lapidus A."/>
            <person name="Monchy S."/>
            <person name="Medigue C."/>
            <person name="Taghavi S."/>
            <person name="McCorkle S."/>
            <person name="Dunn J."/>
            <person name="van der Lelie D."/>
            <person name="Mergeay M."/>
        </authorList>
    </citation>
    <scope>NUCLEOTIDE SEQUENCE [LARGE SCALE GENOMIC DNA]</scope>
    <source>
        <strain>ATCC 43123 / DSM 2839 / NBRC 102507 / CH34</strain>
    </source>
</reference>
<evidence type="ECO:0000255" key="1">
    <source>
        <dbReference type="HAMAP-Rule" id="MF_00688"/>
    </source>
</evidence>
<organism>
    <name type="scientific">Cupriavidus metallidurans (strain ATCC 43123 / DSM 2839 / NBRC 102507 / CH34)</name>
    <name type="common">Ralstonia metallidurans</name>
    <dbReference type="NCBI Taxonomy" id="266264"/>
    <lineage>
        <taxon>Bacteria</taxon>
        <taxon>Pseudomonadati</taxon>
        <taxon>Pseudomonadota</taxon>
        <taxon>Betaproteobacteria</taxon>
        <taxon>Burkholderiales</taxon>
        <taxon>Burkholderiaceae</taxon>
        <taxon>Cupriavidus</taxon>
    </lineage>
</organism>
<comment type="function">
    <text evidence="1">Functions in the N-end rule pathway of protein degradation where it conjugates Leu, Phe and, less efficiently, Met from aminoacyl-tRNAs to the N-termini of proteins containing an N-terminal arginine or lysine.</text>
</comment>
<comment type="catalytic activity">
    <reaction evidence="1">
        <text>N-terminal L-lysyl-[protein] + L-leucyl-tRNA(Leu) = N-terminal L-leucyl-L-lysyl-[protein] + tRNA(Leu) + H(+)</text>
        <dbReference type="Rhea" id="RHEA:12340"/>
        <dbReference type="Rhea" id="RHEA-COMP:9613"/>
        <dbReference type="Rhea" id="RHEA-COMP:9622"/>
        <dbReference type="Rhea" id="RHEA-COMP:12670"/>
        <dbReference type="Rhea" id="RHEA-COMP:12671"/>
        <dbReference type="ChEBI" id="CHEBI:15378"/>
        <dbReference type="ChEBI" id="CHEBI:65249"/>
        <dbReference type="ChEBI" id="CHEBI:78442"/>
        <dbReference type="ChEBI" id="CHEBI:78494"/>
        <dbReference type="ChEBI" id="CHEBI:133043"/>
        <dbReference type="EC" id="2.3.2.6"/>
    </reaction>
</comment>
<comment type="catalytic activity">
    <reaction evidence="1">
        <text>N-terminal L-arginyl-[protein] + L-leucyl-tRNA(Leu) = N-terminal L-leucyl-L-arginyl-[protein] + tRNA(Leu) + H(+)</text>
        <dbReference type="Rhea" id="RHEA:50416"/>
        <dbReference type="Rhea" id="RHEA-COMP:9613"/>
        <dbReference type="Rhea" id="RHEA-COMP:9622"/>
        <dbReference type="Rhea" id="RHEA-COMP:12672"/>
        <dbReference type="Rhea" id="RHEA-COMP:12673"/>
        <dbReference type="ChEBI" id="CHEBI:15378"/>
        <dbReference type="ChEBI" id="CHEBI:64719"/>
        <dbReference type="ChEBI" id="CHEBI:78442"/>
        <dbReference type="ChEBI" id="CHEBI:78494"/>
        <dbReference type="ChEBI" id="CHEBI:133044"/>
        <dbReference type="EC" id="2.3.2.6"/>
    </reaction>
</comment>
<comment type="catalytic activity">
    <reaction evidence="1">
        <text>L-phenylalanyl-tRNA(Phe) + an N-terminal L-alpha-aminoacyl-[protein] = an N-terminal L-phenylalanyl-L-alpha-aminoacyl-[protein] + tRNA(Phe)</text>
        <dbReference type="Rhea" id="RHEA:43632"/>
        <dbReference type="Rhea" id="RHEA-COMP:9668"/>
        <dbReference type="Rhea" id="RHEA-COMP:9699"/>
        <dbReference type="Rhea" id="RHEA-COMP:10636"/>
        <dbReference type="Rhea" id="RHEA-COMP:10637"/>
        <dbReference type="ChEBI" id="CHEBI:78442"/>
        <dbReference type="ChEBI" id="CHEBI:78531"/>
        <dbReference type="ChEBI" id="CHEBI:78597"/>
        <dbReference type="ChEBI" id="CHEBI:83561"/>
        <dbReference type="EC" id="2.3.2.6"/>
    </reaction>
</comment>
<comment type="subcellular location">
    <subcellularLocation>
        <location evidence="1">Cytoplasm</location>
    </subcellularLocation>
</comment>
<comment type="similarity">
    <text evidence="1">Belongs to the L/F-transferase family.</text>
</comment>
<protein>
    <recommendedName>
        <fullName evidence="1">Leucyl/phenylalanyl-tRNA--protein transferase</fullName>
        <ecNumber evidence="1">2.3.2.6</ecNumber>
    </recommendedName>
    <alternativeName>
        <fullName evidence="1">L/F-transferase</fullName>
    </alternativeName>
    <alternativeName>
        <fullName evidence="1">Leucyltransferase</fullName>
    </alternativeName>
    <alternativeName>
        <fullName evidence="1">Phenyalanyltransferase</fullName>
    </alternativeName>
</protein>
<keyword id="KW-0012">Acyltransferase</keyword>
<keyword id="KW-0963">Cytoplasm</keyword>
<keyword id="KW-1185">Reference proteome</keyword>
<keyword id="KW-0808">Transferase</keyword>
<feature type="chain" id="PRO_0000258084" description="Leucyl/phenylalanyl-tRNA--protein transferase">
    <location>
        <begin position="1"/>
        <end position="249"/>
    </location>
</feature>
<accession>Q1LP24</accession>
<gene>
    <name evidence="1" type="primary">aat</name>
    <name type="ordered locus">Rmet_1216</name>
</gene>
<name>LFTR_CUPMC</name>
<dbReference type="EC" id="2.3.2.6" evidence="1"/>
<dbReference type="EMBL" id="CP000352">
    <property type="protein sequence ID" value="ABF08102.1"/>
    <property type="molecule type" value="Genomic_DNA"/>
</dbReference>
<dbReference type="RefSeq" id="WP_011515992.1">
    <property type="nucleotide sequence ID" value="NC_007973.1"/>
</dbReference>
<dbReference type="SMR" id="Q1LP24"/>
<dbReference type="STRING" id="266264.Rmet_1216"/>
<dbReference type="KEGG" id="rme:Rmet_1216"/>
<dbReference type="eggNOG" id="COG2360">
    <property type="taxonomic scope" value="Bacteria"/>
</dbReference>
<dbReference type="HOGENOM" id="CLU_075045_0_0_4"/>
<dbReference type="Proteomes" id="UP000002429">
    <property type="component" value="Chromosome"/>
</dbReference>
<dbReference type="GO" id="GO:0005737">
    <property type="term" value="C:cytoplasm"/>
    <property type="evidence" value="ECO:0007669"/>
    <property type="project" value="UniProtKB-SubCell"/>
</dbReference>
<dbReference type="GO" id="GO:0008914">
    <property type="term" value="F:leucyl-tRNA--protein transferase activity"/>
    <property type="evidence" value="ECO:0007669"/>
    <property type="project" value="UniProtKB-UniRule"/>
</dbReference>
<dbReference type="GO" id="GO:0030163">
    <property type="term" value="P:protein catabolic process"/>
    <property type="evidence" value="ECO:0007669"/>
    <property type="project" value="UniProtKB-UniRule"/>
</dbReference>
<dbReference type="Gene3D" id="3.40.630.70">
    <property type="entry name" value="Leucyl/phenylalanyl-tRNA-protein transferase, C-terminal domain"/>
    <property type="match status" value="1"/>
</dbReference>
<dbReference type="Gene3D" id="3.30.70.3550">
    <property type="entry name" value="Leucyl/phenylalanyl-tRNA-protein transferase, N-terminal domain"/>
    <property type="match status" value="1"/>
</dbReference>
<dbReference type="HAMAP" id="MF_00688">
    <property type="entry name" value="Leu_Phe_trans"/>
    <property type="match status" value="1"/>
</dbReference>
<dbReference type="InterPro" id="IPR016181">
    <property type="entry name" value="Acyl_CoA_acyltransferase"/>
</dbReference>
<dbReference type="InterPro" id="IPR004616">
    <property type="entry name" value="Leu/Phe-tRNA_Trfase"/>
</dbReference>
<dbReference type="InterPro" id="IPR042203">
    <property type="entry name" value="Leu/Phe-tRNA_Trfase_C"/>
</dbReference>
<dbReference type="InterPro" id="IPR042221">
    <property type="entry name" value="Leu/Phe-tRNA_Trfase_N"/>
</dbReference>
<dbReference type="NCBIfam" id="TIGR00667">
    <property type="entry name" value="aat"/>
    <property type="match status" value="1"/>
</dbReference>
<dbReference type="PANTHER" id="PTHR30098">
    <property type="entry name" value="LEUCYL/PHENYLALANYL-TRNA--PROTEIN TRANSFERASE"/>
    <property type="match status" value="1"/>
</dbReference>
<dbReference type="PANTHER" id="PTHR30098:SF2">
    <property type="entry name" value="LEUCYL_PHENYLALANYL-TRNA--PROTEIN TRANSFERASE"/>
    <property type="match status" value="1"/>
</dbReference>
<dbReference type="Pfam" id="PF03588">
    <property type="entry name" value="Leu_Phe_trans"/>
    <property type="match status" value="1"/>
</dbReference>
<dbReference type="SUPFAM" id="SSF55729">
    <property type="entry name" value="Acyl-CoA N-acyltransferases (Nat)"/>
    <property type="match status" value="1"/>
</dbReference>
<proteinExistence type="inferred from homology"/>
<sequence>MITWLDPQDPFPPVERALGPASDAPGLLAASRDLSPQRLLLAYRQGIFPWYSEGQPVLWWSTDPRMVLAPHRLKISVSLRKTLRRILRDPDWEIRVDDDFVAVMQACAMTPRDGQLGTWITDDIVAAYGSLHRLGLAHSVETWYRGERVGGLYGVALGRMFYGESMFAHRTDASKIALAALCGFLERHGVTMIDCQQETDHLASLGAEPIPREQFIAHVRQTAAEANISPWRFDKSELTRWTSQASTEL</sequence>